<accession>C6C1U5</accession>
<keyword id="KW-0067">ATP-binding</keyword>
<keyword id="KW-0963">Cytoplasm</keyword>
<keyword id="KW-0460">Magnesium</keyword>
<keyword id="KW-0479">Metal-binding</keyword>
<keyword id="KW-0547">Nucleotide-binding</keyword>
<keyword id="KW-0554">One-carbon metabolism</keyword>
<keyword id="KW-0630">Potassium</keyword>
<keyword id="KW-1185">Reference proteome</keyword>
<keyword id="KW-0808">Transferase</keyword>
<evidence type="ECO:0000255" key="1">
    <source>
        <dbReference type="HAMAP-Rule" id="MF_00086"/>
    </source>
</evidence>
<gene>
    <name evidence="1" type="primary">metK</name>
    <name type="ordered locus">Desal_1278</name>
</gene>
<proteinExistence type="inferred from homology"/>
<sequence length="389" mass="42347">MISSKGKYFFTSESVTEGHPDKVADQISDSILDAILAQDKDARVACETLVTTGMAFIAGEISTTGYADFQQIVRDTIREIGYVHSDMGFDADTCAVISSIDKQSVDIAQGVDRNTPESQGAGDQGMMFGFACKETEALMPAPIYYAHKLSRKLTEVRKDATLDYLRPDGKTEVAFEYLDGKPVRIADVVIAAQHDDGIEQGQIYEDIKREVVLASLPAEMIDDATKIYINTTGRFVIGGPMGDCGLTGRKIINDTYGGMGNHGGGAFSGKDPSKVDRSGAYMARYIAKNIVAAGLAERAEVQVAYAIGVAEPVSVLATSHGTGEVSDETLTKAVKEVFDLRPWYISERLDLRRPIYKPSACYGHFGRNNPNFTWERTDAVDDLRTACKI</sequence>
<organism>
    <name type="scientific">Maridesulfovibrio salexigens (strain ATCC 14822 / DSM 2638 / NCIMB 8403 / VKM B-1763)</name>
    <name type="common">Desulfovibrio salexigens</name>
    <dbReference type="NCBI Taxonomy" id="526222"/>
    <lineage>
        <taxon>Bacteria</taxon>
        <taxon>Pseudomonadati</taxon>
        <taxon>Thermodesulfobacteriota</taxon>
        <taxon>Desulfovibrionia</taxon>
        <taxon>Desulfovibrionales</taxon>
        <taxon>Desulfovibrionaceae</taxon>
        <taxon>Maridesulfovibrio</taxon>
    </lineage>
</organism>
<dbReference type="EC" id="2.5.1.6" evidence="1"/>
<dbReference type="EMBL" id="CP001649">
    <property type="protein sequence ID" value="ACS79341.1"/>
    <property type="molecule type" value="Genomic_DNA"/>
</dbReference>
<dbReference type="RefSeq" id="WP_015851159.1">
    <property type="nucleotide sequence ID" value="NC_012881.1"/>
</dbReference>
<dbReference type="SMR" id="C6C1U5"/>
<dbReference type="STRING" id="526222.Desal_1278"/>
<dbReference type="KEGG" id="dsa:Desal_1278"/>
<dbReference type="eggNOG" id="COG0192">
    <property type="taxonomic scope" value="Bacteria"/>
</dbReference>
<dbReference type="HOGENOM" id="CLU_041802_1_1_7"/>
<dbReference type="OrthoDB" id="9801686at2"/>
<dbReference type="UniPathway" id="UPA00315">
    <property type="reaction ID" value="UER00080"/>
</dbReference>
<dbReference type="Proteomes" id="UP000002601">
    <property type="component" value="Chromosome"/>
</dbReference>
<dbReference type="GO" id="GO:0005737">
    <property type="term" value="C:cytoplasm"/>
    <property type="evidence" value="ECO:0007669"/>
    <property type="project" value="UniProtKB-SubCell"/>
</dbReference>
<dbReference type="GO" id="GO:0005524">
    <property type="term" value="F:ATP binding"/>
    <property type="evidence" value="ECO:0007669"/>
    <property type="project" value="UniProtKB-UniRule"/>
</dbReference>
<dbReference type="GO" id="GO:0000287">
    <property type="term" value="F:magnesium ion binding"/>
    <property type="evidence" value="ECO:0007669"/>
    <property type="project" value="UniProtKB-UniRule"/>
</dbReference>
<dbReference type="GO" id="GO:0004478">
    <property type="term" value="F:methionine adenosyltransferase activity"/>
    <property type="evidence" value="ECO:0007669"/>
    <property type="project" value="UniProtKB-UniRule"/>
</dbReference>
<dbReference type="GO" id="GO:0006730">
    <property type="term" value="P:one-carbon metabolic process"/>
    <property type="evidence" value="ECO:0007669"/>
    <property type="project" value="UniProtKB-KW"/>
</dbReference>
<dbReference type="GO" id="GO:0006556">
    <property type="term" value="P:S-adenosylmethionine biosynthetic process"/>
    <property type="evidence" value="ECO:0007669"/>
    <property type="project" value="UniProtKB-UniRule"/>
</dbReference>
<dbReference type="CDD" id="cd18079">
    <property type="entry name" value="S-AdoMet_synt"/>
    <property type="match status" value="1"/>
</dbReference>
<dbReference type="FunFam" id="3.30.300.10:FF:000003">
    <property type="entry name" value="S-adenosylmethionine synthase"/>
    <property type="match status" value="1"/>
</dbReference>
<dbReference type="Gene3D" id="3.30.300.10">
    <property type="match status" value="3"/>
</dbReference>
<dbReference type="HAMAP" id="MF_00086">
    <property type="entry name" value="S_AdoMet_synth1"/>
    <property type="match status" value="1"/>
</dbReference>
<dbReference type="InterPro" id="IPR022631">
    <property type="entry name" value="ADOMET_SYNTHASE_CS"/>
</dbReference>
<dbReference type="InterPro" id="IPR022630">
    <property type="entry name" value="S-AdoMet_synt_C"/>
</dbReference>
<dbReference type="InterPro" id="IPR022629">
    <property type="entry name" value="S-AdoMet_synt_central"/>
</dbReference>
<dbReference type="InterPro" id="IPR022628">
    <property type="entry name" value="S-AdoMet_synt_N"/>
</dbReference>
<dbReference type="InterPro" id="IPR002133">
    <property type="entry name" value="S-AdoMet_synthetase"/>
</dbReference>
<dbReference type="InterPro" id="IPR022636">
    <property type="entry name" value="S-AdoMet_synthetase_sfam"/>
</dbReference>
<dbReference type="NCBIfam" id="TIGR01034">
    <property type="entry name" value="metK"/>
    <property type="match status" value="1"/>
</dbReference>
<dbReference type="PANTHER" id="PTHR11964">
    <property type="entry name" value="S-ADENOSYLMETHIONINE SYNTHETASE"/>
    <property type="match status" value="1"/>
</dbReference>
<dbReference type="Pfam" id="PF02773">
    <property type="entry name" value="S-AdoMet_synt_C"/>
    <property type="match status" value="1"/>
</dbReference>
<dbReference type="Pfam" id="PF02772">
    <property type="entry name" value="S-AdoMet_synt_M"/>
    <property type="match status" value="1"/>
</dbReference>
<dbReference type="Pfam" id="PF00438">
    <property type="entry name" value="S-AdoMet_synt_N"/>
    <property type="match status" value="1"/>
</dbReference>
<dbReference type="PIRSF" id="PIRSF000497">
    <property type="entry name" value="MAT"/>
    <property type="match status" value="1"/>
</dbReference>
<dbReference type="SUPFAM" id="SSF55973">
    <property type="entry name" value="S-adenosylmethionine synthetase"/>
    <property type="match status" value="3"/>
</dbReference>
<dbReference type="PROSITE" id="PS00376">
    <property type="entry name" value="ADOMET_SYNTHASE_1"/>
    <property type="match status" value="1"/>
</dbReference>
<dbReference type="PROSITE" id="PS00377">
    <property type="entry name" value="ADOMET_SYNTHASE_2"/>
    <property type="match status" value="1"/>
</dbReference>
<reference key="1">
    <citation type="submission" date="2009-06" db="EMBL/GenBank/DDBJ databases">
        <title>Complete sequence of Desulfovibrio salexigens DSM 2638.</title>
        <authorList>
            <consortium name="US DOE Joint Genome Institute"/>
            <person name="Lucas S."/>
            <person name="Copeland A."/>
            <person name="Lapidus A."/>
            <person name="Glavina del Rio T."/>
            <person name="Tice H."/>
            <person name="Bruce D."/>
            <person name="Goodwin L."/>
            <person name="Pitluck S."/>
            <person name="Munk A.C."/>
            <person name="Brettin T."/>
            <person name="Detter J.C."/>
            <person name="Han C."/>
            <person name="Tapia R."/>
            <person name="Larimer F."/>
            <person name="Land M."/>
            <person name="Hauser L."/>
            <person name="Kyrpides N."/>
            <person name="Anderson I."/>
            <person name="Wall J.D."/>
            <person name="Arkin A.P."/>
            <person name="Dehal P."/>
            <person name="Chivian D."/>
            <person name="Giles B."/>
            <person name="Hazen T.C."/>
        </authorList>
    </citation>
    <scope>NUCLEOTIDE SEQUENCE [LARGE SCALE GENOMIC DNA]</scope>
    <source>
        <strain>ATCC 14822 / DSM 2638 / NCIMB 8403 / VKM B-1763</strain>
    </source>
</reference>
<protein>
    <recommendedName>
        <fullName evidence="1">S-adenosylmethionine synthase</fullName>
        <shortName evidence="1">AdoMet synthase</shortName>
        <ecNumber evidence="1">2.5.1.6</ecNumber>
    </recommendedName>
    <alternativeName>
        <fullName evidence="1">MAT</fullName>
    </alternativeName>
    <alternativeName>
        <fullName evidence="1">Methionine adenosyltransferase</fullName>
    </alternativeName>
</protein>
<comment type="function">
    <text evidence="1">Catalyzes the formation of S-adenosylmethionine (AdoMet) from methionine and ATP. The overall synthetic reaction is composed of two sequential steps, AdoMet formation and the subsequent tripolyphosphate hydrolysis which occurs prior to release of AdoMet from the enzyme.</text>
</comment>
<comment type="catalytic activity">
    <reaction evidence="1">
        <text>L-methionine + ATP + H2O = S-adenosyl-L-methionine + phosphate + diphosphate</text>
        <dbReference type="Rhea" id="RHEA:21080"/>
        <dbReference type="ChEBI" id="CHEBI:15377"/>
        <dbReference type="ChEBI" id="CHEBI:30616"/>
        <dbReference type="ChEBI" id="CHEBI:33019"/>
        <dbReference type="ChEBI" id="CHEBI:43474"/>
        <dbReference type="ChEBI" id="CHEBI:57844"/>
        <dbReference type="ChEBI" id="CHEBI:59789"/>
        <dbReference type="EC" id="2.5.1.6"/>
    </reaction>
</comment>
<comment type="cofactor">
    <cofactor evidence="1">
        <name>Mg(2+)</name>
        <dbReference type="ChEBI" id="CHEBI:18420"/>
    </cofactor>
    <text evidence="1">Binds 2 divalent ions per subunit.</text>
</comment>
<comment type="cofactor">
    <cofactor evidence="1">
        <name>K(+)</name>
        <dbReference type="ChEBI" id="CHEBI:29103"/>
    </cofactor>
    <text evidence="1">Binds 1 potassium ion per subunit.</text>
</comment>
<comment type="pathway">
    <text evidence="1">Amino-acid biosynthesis; S-adenosyl-L-methionine biosynthesis; S-adenosyl-L-methionine from L-methionine: step 1/1.</text>
</comment>
<comment type="subunit">
    <text evidence="1">Homotetramer; dimer of dimers.</text>
</comment>
<comment type="subcellular location">
    <subcellularLocation>
        <location evidence="1">Cytoplasm</location>
    </subcellularLocation>
</comment>
<comment type="similarity">
    <text evidence="1">Belongs to the AdoMet synthase family.</text>
</comment>
<name>METK_MARSD</name>
<feature type="chain" id="PRO_1000202614" description="S-adenosylmethionine synthase">
    <location>
        <begin position="1"/>
        <end position="389"/>
    </location>
</feature>
<feature type="region of interest" description="Flexible loop" evidence="1">
    <location>
        <begin position="103"/>
        <end position="113"/>
    </location>
</feature>
<feature type="binding site" description="in other chain" evidence="1">
    <location>
        <position position="19"/>
    </location>
    <ligand>
        <name>ATP</name>
        <dbReference type="ChEBI" id="CHEBI:30616"/>
        <note>ligand shared between two neighboring subunits</note>
    </ligand>
</feature>
<feature type="binding site" evidence="1">
    <location>
        <position position="21"/>
    </location>
    <ligand>
        <name>Mg(2+)</name>
        <dbReference type="ChEBI" id="CHEBI:18420"/>
    </ligand>
</feature>
<feature type="binding site" evidence="1">
    <location>
        <position position="47"/>
    </location>
    <ligand>
        <name>K(+)</name>
        <dbReference type="ChEBI" id="CHEBI:29103"/>
    </ligand>
</feature>
<feature type="binding site" description="in other chain" evidence="1">
    <location>
        <position position="60"/>
    </location>
    <ligand>
        <name>L-methionine</name>
        <dbReference type="ChEBI" id="CHEBI:57844"/>
        <note>ligand shared between two neighboring subunits</note>
    </ligand>
</feature>
<feature type="binding site" description="in other chain" evidence="1">
    <location>
        <position position="103"/>
    </location>
    <ligand>
        <name>L-methionine</name>
        <dbReference type="ChEBI" id="CHEBI:57844"/>
        <note>ligand shared between two neighboring subunits</note>
    </ligand>
</feature>
<feature type="binding site" description="in other chain" evidence="1">
    <location>
        <begin position="168"/>
        <end position="170"/>
    </location>
    <ligand>
        <name>ATP</name>
        <dbReference type="ChEBI" id="CHEBI:30616"/>
        <note>ligand shared between two neighboring subunits</note>
    </ligand>
</feature>
<feature type="binding site" description="in other chain" evidence="1">
    <location>
        <begin position="234"/>
        <end position="235"/>
    </location>
    <ligand>
        <name>ATP</name>
        <dbReference type="ChEBI" id="CHEBI:30616"/>
        <note>ligand shared between two neighboring subunits</note>
    </ligand>
</feature>
<feature type="binding site" evidence="1">
    <location>
        <position position="243"/>
    </location>
    <ligand>
        <name>ATP</name>
        <dbReference type="ChEBI" id="CHEBI:30616"/>
        <note>ligand shared between two neighboring subunits</note>
    </ligand>
</feature>
<feature type="binding site" evidence="1">
    <location>
        <position position="243"/>
    </location>
    <ligand>
        <name>L-methionine</name>
        <dbReference type="ChEBI" id="CHEBI:57844"/>
        <note>ligand shared between two neighboring subunits</note>
    </ligand>
</feature>
<feature type="binding site" description="in other chain" evidence="1">
    <location>
        <begin position="249"/>
        <end position="250"/>
    </location>
    <ligand>
        <name>ATP</name>
        <dbReference type="ChEBI" id="CHEBI:30616"/>
        <note>ligand shared between two neighboring subunits</note>
    </ligand>
</feature>
<feature type="binding site" evidence="1">
    <location>
        <position position="266"/>
    </location>
    <ligand>
        <name>ATP</name>
        <dbReference type="ChEBI" id="CHEBI:30616"/>
        <note>ligand shared between two neighboring subunits</note>
    </ligand>
</feature>
<feature type="binding site" evidence="1">
    <location>
        <position position="270"/>
    </location>
    <ligand>
        <name>ATP</name>
        <dbReference type="ChEBI" id="CHEBI:30616"/>
        <note>ligand shared between two neighboring subunits</note>
    </ligand>
</feature>
<feature type="binding site" description="in other chain" evidence="1">
    <location>
        <position position="274"/>
    </location>
    <ligand>
        <name>L-methionine</name>
        <dbReference type="ChEBI" id="CHEBI:57844"/>
        <note>ligand shared between two neighboring subunits</note>
    </ligand>
</feature>